<gene>
    <name evidence="1" type="primary">miaB</name>
    <name type="ordered locus">CBO1801</name>
    <name type="ordered locus">CLC_1743</name>
</gene>
<feature type="chain" id="PRO_0000374224" description="tRNA-2-methylthio-N(6)-dimethylallyladenosine synthase">
    <location>
        <begin position="1"/>
        <end position="450"/>
    </location>
</feature>
<feature type="domain" description="MTTase N-terminal" evidence="1">
    <location>
        <begin position="14"/>
        <end position="132"/>
    </location>
</feature>
<feature type="domain" description="Radical SAM core" evidence="2">
    <location>
        <begin position="155"/>
        <end position="385"/>
    </location>
</feature>
<feature type="domain" description="TRAM" evidence="1">
    <location>
        <begin position="388"/>
        <end position="450"/>
    </location>
</feature>
<feature type="binding site" evidence="1">
    <location>
        <position position="23"/>
    </location>
    <ligand>
        <name>[4Fe-4S] cluster</name>
        <dbReference type="ChEBI" id="CHEBI:49883"/>
        <label>1</label>
    </ligand>
</feature>
<feature type="binding site" evidence="1">
    <location>
        <position position="59"/>
    </location>
    <ligand>
        <name>[4Fe-4S] cluster</name>
        <dbReference type="ChEBI" id="CHEBI:49883"/>
        <label>1</label>
    </ligand>
</feature>
<feature type="binding site" evidence="1">
    <location>
        <position position="93"/>
    </location>
    <ligand>
        <name>[4Fe-4S] cluster</name>
        <dbReference type="ChEBI" id="CHEBI:49883"/>
        <label>1</label>
    </ligand>
</feature>
<feature type="binding site" evidence="1">
    <location>
        <position position="169"/>
    </location>
    <ligand>
        <name>[4Fe-4S] cluster</name>
        <dbReference type="ChEBI" id="CHEBI:49883"/>
        <label>2</label>
        <note>4Fe-4S-S-AdoMet</note>
    </ligand>
</feature>
<feature type="binding site" evidence="1">
    <location>
        <position position="173"/>
    </location>
    <ligand>
        <name>[4Fe-4S] cluster</name>
        <dbReference type="ChEBI" id="CHEBI:49883"/>
        <label>2</label>
        <note>4Fe-4S-S-AdoMet</note>
    </ligand>
</feature>
<feature type="binding site" evidence="1">
    <location>
        <position position="176"/>
    </location>
    <ligand>
        <name>[4Fe-4S] cluster</name>
        <dbReference type="ChEBI" id="CHEBI:49883"/>
        <label>2</label>
        <note>4Fe-4S-S-AdoMet</note>
    </ligand>
</feature>
<dbReference type="EC" id="2.8.4.3" evidence="1"/>
<dbReference type="EMBL" id="CP000727">
    <property type="protein sequence ID" value="ABS38082.1"/>
    <property type="molecule type" value="Genomic_DNA"/>
</dbReference>
<dbReference type="EMBL" id="AM412317">
    <property type="protein sequence ID" value="CAL83340.1"/>
    <property type="molecule type" value="Genomic_DNA"/>
</dbReference>
<dbReference type="RefSeq" id="WP_011986381.1">
    <property type="nucleotide sequence ID" value="NC_009698.1"/>
</dbReference>
<dbReference type="RefSeq" id="YP_001254301.1">
    <property type="nucleotide sequence ID" value="NC_009495.1"/>
</dbReference>
<dbReference type="RefSeq" id="YP_001387598.1">
    <property type="nucleotide sequence ID" value="NC_009698.1"/>
</dbReference>
<dbReference type="SMR" id="A5I2S3"/>
<dbReference type="GeneID" id="5186056"/>
<dbReference type="KEGG" id="cbh:CLC_1743"/>
<dbReference type="KEGG" id="cbo:CBO1801"/>
<dbReference type="PATRIC" id="fig|413999.7.peg.1772"/>
<dbReference type="HOGENOM" id="CLU_018697_2_0_9"/>
<dbReference type="PRO" id="PR:A5I2S3"/>
<dbReference type="Proteomes" id="UP000001986">
    <property type="component" value="Chromosome"/>
</dbReference>
<dbReference type="GO" id="GO:0005829">
    <property type="term" value="C:cytosol"/>
    <property type="evidence" value="ECO:0000318"/>
    <property type="project" value="GO_Central"/>
</dbReference>
<dbReference type="GO" id="GO:0051539">
    <property type="term" value="F:4 iron, 4 sulfur cluster binding"/>
    <property type="evidence" value="ECO:0000318"/>
    <property type="project" value="GO_Central"/>
</dbReference>
<dbReference type="GO" id="GO:0046872">
    <property type="term" value="F:metal ion binding"/>
    <property type="evidence" value="ECO:0007669"/>
    <property type="project" value="UniProtKB-KW"/>
</dbReference>
<dbReference type="GO" id="GO:0035597">
    <property type="term" value="F:N6-isopentenyladenosine methylthiotransferase activity"/>
    <property type="evidence" value="ECO:0000318"/>
    <property type="project" value="GO_Central"/>
</dbReference>
<dbReference type="GO" id="GO:0035600">
    <property type="term" value="P:tRNA methylthiolation"/>
    <property type="evidence" value="ECO:0000318"/>
    <property type="project" value="GO_Central"/>
</dbReference>
<dbReference type="CDD" id="cd01335">
    <property type="entry name" value="Radical_SAM"/>
    <property type="match status" value="1"/>
</dbReference>
<dbReference type="FunFam" id="3.40.50.12160:FF:000006">
    <property type="entry name" value="tRNA-2-methylthio-N(6)-dimethylallyladenosine synthase"/>
    <property type="match status" value="1"/>
</dbReference>
<dbReference type="FunFam" id="3.80.30.20:FF:000001">
    <property type="entry name" value="tRNA-2-methylthio-N(6)-dimethylallyladenosine synthase 2"/>
    <property type="match status" value="1"/>
</dbReference>
<dbReference type="Gene3D" id="3.40.50.12160">
    <property type="entry name" value="Methylthiotransferase, N-terminal domain"/>
    <property type="match status" value="1"/>
</dbReference>
<dbReference type="Gene3D" id="3.80.30.20">
    <property type="entry name" value="tm_1862 like domain"/>
    <property type="match status" value="1"/>
</dbReference>
<dbReference type="HAMAP" id="MF_01864">
    <property type="entry name" value="tRNA_metthiotr_MiaB"/>
    <property type="match status" value="1"/>
</dbReference>
<dbReference type="InterPro" id="IPR006638">
    <property type="entry name" value="Elp3/MiaA/NifB-like_rSAM"/>
</dbReference>
<dbReference type="InterPro" id="IPR005839">
    <property type="entry name" value="Methylthiotransferase"/>
</dbReference>
<dbReference type="InterPro" id="IPR020612">
    <property type="entry name" value="Methylthiotransferase_CS"/>
</dbReference>
<dbReference type="InterPro" id="IPR013848">
    <property type="entry name" value="Methylthiotransferase_N"/>
</dbReference>
<dbReference type="InterPro" id="IPR038135">
    <property type="entry name" value="Methylthiotransferase_N_sf"/>
</dbReference>
<dbReference type="InterPro" id="IPR006463">
    <property type="entry name" value="MiaB_methiolase"/>
</dbReference>
<dbReference type="InterPro" id="IPR007197">
    <property type="entry name" value="rSAM"/>
</dbReference>
<dbReference type="InterPro" id="IPR023404">
    <property type="entry name" value="rSAM_horseshoe"/>
</dbReference>
<dbReference type="InterPro" id="IPR002792">
    <property type="entry name" value="TRAM_dom"/>
</dbReference>
<dbReference type="NCBIfam" id="TIGR01574">
    <property type="entry name" value="miaB-methiolase"/>
    <property type="match status" value="1"/>
</dbReference>
<dbReference type="NCBIfam" id="TIGR00089">
    <property type="entry name" value="MiaB/RimO family radical SAM methylthiotransferase"/>
    <property type="match status" value="1"/>
</dbReference>
<dbReference type="PANTHER" id="PTHR43020">
    <property type="entry name" value="CDK5 REGULATORY SUBUNIT-ASSOCIATED PROTEIN 1"/>
    <property type="match status" value="1"/>
</dbReference>
<dbReference type="PANTHER" id="PTHR43020:SF2">
    <property type="entry name" value="MITOCHONDRIAL TRNA METHYLTHIOTRANSFERASE CDK5RAP1"/>
    <property type="match status" value="1"/>
</dbReference>
<dbReference type="Pfam" id="PF04055">
    <property type="entry name" value="Radical_SAM"/>
    <property type="match status" value="1"/>
</dbReference>
<dbReference type="Pfam" id="PF01938">
    <property type="entry name" value="TRAM"/>
    <property type="match status" value="1"/>
</dbReference>
<dbReference type="Pfam" id="PF00919">
    <property type="entry name" value="UPF0004"/>
    <property type="match status" value="1"/>
</dbReference>
<dbReference type="SFLD" id="SFLDF00273">
    <property type="entry name" value="(dimethylallyl)adenosine_tRNA"/>
    <property type="match status" value="1"/>
</dbReference>
<dbReference type="SFLD" id="SFLDG01082">
    <property type="entry name" value="B12-binding_domain_containing"/>
    <property type="match status" value="1"/>
</dbReference>
<dbReference type="SFLD" id="SFLDS00029">
    <property type="entry name" value="Radical_SAM"/>
    <property type="match status" value="1"/>
</dbReference>
<dbReference type="SMART" id="SM00729">
    <property type="entry name" value="Elp3"/>
    <property type="match status" value="1"/>
</dbReference>
<dbReference type="SUPFAM" id="SSF102114">
    <property type="entry name" value="Radical SAM enzymes"/>
    <property type="match status" value="1"/>
</dbReference>
<dbReference type="PROSITE" id="PS51449">
    <property type="entry name" value="MTTASE_N"/>
    <property type="match status" value="1"/>
</dbReference>
<dbReference type="PROSITE" id="PS01278">
    <property type="entry name" value="MTTASE_RADICAL"/>
    <property type="match status" value="1"/>
</dbReference>
<dbReference type="PROSITE" id="PS51918">
    <property type="entry name" value="RADICAL_SAM"/>
    <property type="match status" value="1"/>
</dbReference>
<dbReference type="PROSITE" id="PS50926">
    <property type="entry name" value="TRAM"/>
    <property type="match status" value="1"/>
</dbReference>
<comment type="function">
    <text evidence="1">Catalyzes the methylthiolation of N6-(dimethylallyl)adenosine (i(6)A), leading to the formation of 2-methylthio-N6-(dimethylallyl)adenosine (ms(2)i(6)A) at position 37 in tRNAs that read codons beginning with uridine.</text>
</comment>
<comment type="catalytic activity">
    <reaction evidence="1">
        <text>N(6)-dimethylallyladenosine(37) in tRNA + (sulfur carrier)-SH + AH2 + 2 S-adenosyl-L-methionine = 2-methylsulfanyl-N(6)-dimethylallyladenosine(37) in tRNA + (sulfur carrier)-H + 5'-deoxyadenosine + L-methionine + A + S-adenosyl-L-homocysteine + 2 H(+)</text>
        <dbReference type="Rhea" id="RHEA:37067"/>
        <dbReference type="Rhea" id="RHEA-COMP:10375"/>
        <dbReference type="Rhea" id="RHEA-COMP:10376"/>
        <dbReference type="Rhea" id="RHEA-COMP:14737"/>
        <dbReference type="Rhea" id="RHEA-COMP:14739"/>
        <dbReference type="ChEBI" id="CHEBI:13193"/>
        <dbReference type="ChEBI" id="CHEBI:15378"/>
        <dbReference type="ChEBI" id="CHEBI:17319"/>
        <dbReference type="ChEBI" id="CHEBI:17499"/>
        <dbReference type="ChEBI" id="CHEBI:29917"/>
        <dbReference type="ChEBI" id="CHEBI:57844"/>
        <dbReference type="ChEBI" id="CHEBI:57856"/>
        <dbReference type="ChEBI" id="CHEBI:59789"/>
        <dbReference type="ChEBI" id="CHEBI:64428"/>
        <dbReference type="ChEBI" id="CHEBI:74415"/>
        <dbReference type="ChEBI" id="CHEBI:74417"/>
        <dbReference type="EC" id="2.8.4.3"/>
    </reaction>
</comment>
<comment type="cofactor">
    <cofactor evidence="1">
        <name>[4Fe-4S] cluster</name>
        <dbReference type="ChEBI" id="CHEBI:49883"/>
    </cofactor>
    <text evidence="1">Binds 2 [4Fe-4S] clusters. One cluster is coordinated with 3 cysteines and an exchangeable S-adenosyl-L-methionine.</text>
</comment>
<comment type="subunit">
    <text evidence="1">Monomer.</text>
</comment>
<comment type="subcellular location">
    <subcellularLocation>
        <location evidence="1">Cytoplasm</location>
    </subcellularLocation>
</comment>
<comment type="similarity">
    <text evidence="1">Belongs to the methylthiotransferase family. MiaB subfamily.</text>
</comment>
<protein>
    <recommendedName>
        <fullName evidence="1">tRNA-2-methylthio-N(6)-dimethylallyladenosine synthase</fullName>
        <ecNumber evidence="1">2.8.4.3</ecNumber>
    </recommendedName>
    <alternativeName>
        <fullName evidence="1">(Dimethylallyl)adenosine tRNA methylthiotransferase MiaB</fullName>
    </alternativeName>
    <alternativeName>
        <fullName evidence="1">tRNA-i(6)A37 methylthiotransferase</fullName>
    </alternativeName>
</protein>
<keyword id="KW-0004">4Fe-4S</keyword>
<keyword id="KW-0963">Cytoplasm</keyword>
<keyword id="KW-0408">Iron</keyword>
<keyword id="KW-0411">Iron-sulfur</keyword>
<keyword id="KW-0479">Metal-binding</keyword>
<keyword id="KW-1185">Reference proteome</keyword>
<keyword id="KW-0949">S-adenosyl-L-methionine</keyword>
<keyword id="KW-0808">Transferase</keyword>
<keyword id="KW-0819">tRNA processing</keyword>
<accession>A5I2S3</accession>
<accession>A7G483</accession>
<name>MIAB_CLOBH</name>
<reference key="1">
    <citation type="journal article" date="2007" name="Genome Res.">
        <title>Genome sequence of a proteolytic (Group I) Clostridium botulinum strain Hall A and comparative analysis of the clostridial genomes.</title>
        <authorList>
            <person name="Sebaihia M."/>
            <person name="Peck M.W."/>
            <person name="Minton N.P."/>
            <person name="Thomson N.R."/>
            <person name="Holden M.T.G."/>
            <person name="Mitchell W.J."/>
            <person name="Carter A.T."/>
            <person name="Bentley S.D."/>
            <person name="Mason D.R."/>
            <person name="Crossman L."/>
            <person name="Paul C.J."/>
            <person name="Ivens A."/>
            <person name="Wells-Bennik M.H.J."/>
            <person name="Davis I.J."/>
            <person name="Cerdeno-Tarraga A.M."/>
            <person name="Churcher C."/>
            <person name="Quail M.A."/>
            <person name="Chillingworth T."/>
            <person name="Feltwell T."/>
            <person name="Fraser A."/>
            <person name="Goodhead I."/>
            <person name="Hance Z."/>
            <person name="Jagels K."/>
            <person name="Larke N."/>
            <person name="Maddison M."/>
            <person name="Moule S."/>
            <person name="Mungall K."/>
            <person name="Norbertczak H."/>
            <person name="Rabbinowitsch E."/>
            <person name="Sanders M."/>
            <person name="Simmonds M."/>
            <person name="White B."/>
            <person name="Whithead S."/>
            <person name="Parkhill J."/>
        </authorList>
    </citation>
    <scope>NUCLEOTIDE SEQUENCE [LARGE SCALE GENOMIC DNA]</scope>
    <source>
        <strain>Hall / ATCC 3502 / NCTC 13319 / Type A</strain>
    </source>
</reference>
<reference key="2">
    <citation type="journal article" date="2007" name="PLoS ONE">
        <title>Analysis of the neurotoxin complex genes in Clostridium botulinum A1-A4 and B1 strains: BoNT/A3, /Ba4 and /B1 clusters are located within plasmids.</title>
        <authorList>
            <person name="Smith T.J."/>
            <person name="Hill K.K."/>
            <person name="Foley B.T."/>
            <person name="Detter J.C."/>
            <person name="Munk A.C."/>
            <person name="Bruce D.C."/>
            <person name="Doggett N.A."/>
            <person name="Smith L.A."/>
            <person name="Marks J.D."/>
            <person name="Xie G."/>
            <person name="Brettin T.S."/>
        </authorList>
    </citation>
    <scope>NUCLEOTIDE SEQUENCE [LARGE SCALE GENOMIC DNA]</scope>
    <source>
        <strain>Hall / ATCC 3502 / NCTC 13319 / Type A</strain>
    </source>
</reference>
<evidence type="ECO:0000255" key="1">
    <source>
        <dbReference type="HAMAP-Rule" id="MF_01864"/>
    </source>
</evidence>
<evidence type="ECO:0000255" key="2">
    <source>
        <dbReference type="PROSITE-ProRule" id="PRU01266"/>
    </source>
</evidence>
<sequence>MNEILNTKDINVIGEFFIETWGCQMNEEDSEKLSGMLKKEGYIRTEERENADVIIFNTCCVRENAELKVYGNLGILKGLKSKNPNLIIAVTGCMMQQKGMAETIKKKFPFVDIIIGTHNLHNFPNYLNEVKKKDTSVLKIQEKENSIIENMPIDRKNSMKAFVTIMYGCNNFCTYCIVPYVRGRERSRTPENIEAEIKKLISEGYKEITLLGQNVNSYGKDLEPNVTFAELLKRVNNIEGLERVRFMTSHPKDLTDDVIEAIAKCDKLCEQIHLPVQSGSSEILKKMNRHYDREKYLDVVSKIKKLIPNVALSTDIIVGFPGETEKDFEETLSLVKEVEYDSAFTFLYSIRKGTPAAKFEDQVPEDVKHKRFNRLVEVLNEISAKKNKAYEGKIEEVLVEGTSKNDENKLMGRTRTGKLVNFIGDKDSIGELVNVKIIKANSFSLTGEEI</sequence>
<organism>
    <name type="scientific">Clostridium botulinum (strain Hall / ATCC 3502 / NCTC 13319 / Type A)</name>
    <dbReference type="NCBI Taxonomy" id="441771"/>
    <lineage>
        <taxon>Bacteria</taxon>
        <taxon>Bacillati</taxon>
        <taxon>Bacillota</taxon>
        <taxon>Clostridia</taxon>
        <taxon>Eubacteriales</taxon>
        <taxon>Clostridiaceae</taxon>
        <taxon>Clostridium</taxon>
    </lineage>
</organism>
<proteinExistence type="inferred from homology"/>